<proteinExistence type="evidence at protein level"/>
<comment type="function">
    <text evidence="4 5">DNA-binding transcription factor that is essential for male fertility, spermatogenesis and meiotic prophase progression in spermatocytes under non-stress conditions (PubMed:37206036, PubMed:38684656). Positvely and negatively regulates gene expression to ensure progression of meiotic prophase beyond pachytene stage in spermatocytes (PubMed:38684656). Plays a role in male germline meiotic sex chromosome remodeling and silencing through regulation of SMARCA4 (PubMed:37206036).</text>
</comment>
<comment type="subunit">
    <text evidence="5">Homooligomer.</text>
</comment>
<comment type="subcellular location">
    <subcellularLocation>
        <location evidence="5">Nucleus</location>
    </subcellularLocation>
    <subcellularLocation>
        <location evidence="4 5">Chromosome</location>
    </subcellularLocation>
    <text evidence="4 5">Expressed primarily in the XY body of pachytene spermatocytes.</text>
</comment>
<comment type="tissue specificity">
    <text evidence="3 4 5">Highly expressed in testis particularly in spermatocytes (at protein level). Not expressed in fetal testis and ovary.</text>
</comment>
<comment type="disruption phenotype">
    <text evidence="4 5">Male mice are sterile. Show impaired spermatogenesis and spermatocytes fail to progress beyond the pachytene stage and are consequently eliminated by apoptosis. Spermatocytes show aberrant sex chromosome remodeling and silencing.</text>
</comment>
<comment type="similarity">
    <text evidence="6">Belongs to the HSF family.</text>
</comment>
<gene>
    <name type="primary">Hsf5</name>
    <name type="synonym">Gm739</name>
</gene>
<reference key="1">
    <citation type="journal article" date="2009" name="PLoS Biol.">
        <title>Lineage-specific biology revealed by a finished genome assembly of the mouse.</title>
        <authorList>
            <person name="Church D.M."/>
            <person name="Goodstadt L."/>
            <person name="Hillier L.W."/>
            <person name="Zody M.C."/>
            <person name="Goldstein S."/>
            <person name="She X."/>
            <person name="Bult C.J."/>
            <person name="Agarwala R."/>
            <person name="Cherry J.L."/>
            <person name="DiCuccio M."/>
            <person name="Hlavina W."/>
            <person name="Kapustin Y."/>
            <person name="Meric P."/>
            <person name="Maglott D."/>
            <person name="Birtle Z."/>
            <person name="Marques A.C."/>
            <person name="Graves T."/>
            <person name="Zhou S."/>
            <person name="Teague B."/>
            <person name="Potamousis K."/>
            <person name="Churas C."/>
            <person name="Place M."/>
            <person name="Herschleb J."/>
            <person name="Runnheim R."/>
            <person name="Forrest D."/>
            <person name="Amos-Landgraf J."/>
            <person name="Schwartz D.C."/>
            <person name="Cheng Z."/>
            <person name="Lindblad-Toh K."/>
            <person name="Eichler E.E."/>
            <person name="Ponting C.P."/>
        </authorList>
    </citation>
    <scope>NUCLEOTIDE SEQUENCE [LARGE SCALE GENOMIC DNA]</scope>
    <source>
        <strain>C57BL/6J</strain>
    </source>
</reference>
<reference key="2">
    <citation type="journal article" date="2005" name="Science">
        <title>The transcriptional landscape of the mammalian genome.</title>
        <authorList>
            <person name="Carninci P."/>
            <person name="Kasukawa T."/>
            <person name="Katayama S."/>
            <person name="Gough J."/>
            <person name="Frith M.C."/>
            <person name="Maeda N."/>
            <person name="Oyama R."/>
            <person name="Ravasi T."/>
            <person name="Lenhard B."/>
            <person name="Wells C."/>
            <person name="Kodzius R."/>
            <person name="Shimokawa K."/>
            <person name="Bajic V.B."/>
            <person name="Brenner S.E."/>
            <person name="Batalov S."/>
            <person name="Forrest A.R."/>
            <person name="Zavolan M."/>
            <person name="Davis M.J."/>
            <person name="Wilming L.G."/>
            <person name="Aidinis V."/>
            <person name="Allen J.E."/>
            <person name="Ambesi-Impiombato A."/>
            <person name="Apweiler R."/>
            <person name="Aturaliya R.N."/>
            <person name="Bailey T.L."/>
            <person name="Bansal M."/>
            <person name="Baxter L."/>
            <person name="Beisel K.W."/>
            <person name="Bersano T."/>
            <person name="Bono H."/>
            <person name="Chalk A.M."/>
            <person name="Chiu K.P."/>
            <person name="Choudhary V."/>
            <person name="Christoffels A."/>
            <person name="Clutterbuck D.R."/>
            <person name="Crowe M.L."/>
            <person name="Dalla E."/>
            <person name="Dalrymple B.P."/>
            <person name="de Bono B."/>
            <person name="Della Gatta G."/>
            <person name="di Bernardo D."/>
            <person name="Down T."/>
            <person name="Engstrom P."/>
            <person name="Fagiolini M."/>
            <person name="Faulkner G."/>
            <person name="Fletcher C.F."/>
            <person name="Fukushima T."/>
            <person name="Furuno M."/>
            <person name="Futaki S."/>
            <person name="Gariboldi M."/>
            <person name="Georgii-Hemming P."/>
            <person name="Gingeras T.R."/>
            <person name="Gojobori T."/>
            <person name="Green R.E."/>
            <person name="Gustincich S."/>
            <person name="Harbers M."/>
            <person name="Hayashi Y."/>
            <person name="Hensch T.K."/>
            <person name="Hirokawa N."/>
            <person name="Hill D."/>
            <person name="Huminiecki L."/>
            <person name="Iacono M."/>
            <person name="Ikeo K."/>
            <person name="Iwama A."/>
            <person name="Ishikawa T."/>
            <person name="Jakt M."/>
            <person name="Kanapin A."/>
            <person name="Katoh M."/>
            <person name="Kawasawa Y."/>
            <person name="Kelso J."/>
            <person name="Kitamura H."/>
            <person name="Kitano H."/>
            <person name="Kollias G."/>
            <person name="Krishnan S.P."/>
            <person name="Kruger A."/>
            <person name="Kummerfeld S.K."/>
            <person name="Kurochkin I.V."/>
            <person name="Lareau L.F."/>
            <person name="Lazarevic D."/>
            <person name="Lipovich L."/>
            <person name="Liu J."/>
            <person name="Liuni S."/>
            <person name="McWilliam S."/>
            <person name="Madan Babu M."/>
            <person name="Madera M."/>
            <person name="Marchionni L."/>
            <person name="Matsuda H."/>
            <person name="Matsuzawa S."/>
            <person name="Miki H."/>
            <person name="Mignone F."/>
            <person name="Miyake S."/>
            <person name="Morris K."/>
            <person name="Mottagui-Tabar S."/>
            <person name="Mulder N."/>
            <person name="Nakano N."/>
            <person name="Nakauchi H."/>
            <person name="Ng P."/>
            <person name="Nilsson R."/>
            <person name="Nishiguchi S."/>
            <person name="Nishikawa S."/>
            <person name="Nori F."/>
            <person name="Ohara O."/>
            <person name="Okazaki Y."/>
            <person name="Orlando V."/>
            <person name="Pang K.C."/>
            <person name="Pavan W.J."/>
            <person name="Pavesi G."/>
            <person name="Pesole G."/>
            <person name="Petrovsky N."/>
            <person name="Piazza S."/>
            <person name="Reed J."/>
            <person name="Reid J.F."/>
            <person name="Ring B.Z."/>
            <person name="Ringwald M."/>
            <person name="Rost B."/>
            <person name="Ruan Y."/>
            <person name="Salzberg S.L."/>
            <person name="Sandelin A."/>
            <person name="Schneider C."/>
            <person name="Schoenbach C."/>
            <person name="Sekiguchi K."/>
            <person name="Semple C.A."/>
            <person name="Seno S."/>
            <person name="Sessa L."/>
            <person name="Sheng Y."/>
            <person name="Shibata Y."/>
            <person name="Shimada H."/>
            <person name="Shimada K."/>
            <person name="Silva D."/>
            <person name="Sinclair B."/>
            <person name="Sperling S."/>
            <person name="Stupka E."/>
            <person name="Sugiura K."/>
            <person name="Sultana R."/>
            <person name="Takenaka Y."/>
            <person name="Taki K."/>
            <person name="Tammoja K."/>
            <person name="Tan S.L."/>
            <person name="Tang S."/>
            <person name="Taylor M.S."/>
            <person name="Tegner J."/>
            <person name="Teichmann S.A."/>
            <person name="Ueda H.R."/>
            <person name="van Nimwegen E."/>
            <person name="Verardo R."/>
            <person name="Wei C.L."/>
            <person name="Yagi K."/>
            <person name="Yamanishi H."/>
            <person name="Zabarovsky E."/>
            <person name="Zhu S."/>
            <person name="Zimmer A."/>
            <person name="Hide W."/>
            <person name="Bult C."/>
            <person name="Grimmond S.M."/>
            <person name="Teasdale R.D."/>
            <person name="Liu E.T."/>
            <person name="Brusic V."/>
            <person name="Quackenbush J."/>
            <person name="Wahlestedt C."/>
            <person name="Mattick J.S."/>
            <person name="Hume D.A."/>
            <person name="Kai C."/>
            <person name="Sasaki D."/>
            <person name="Tomaru Y."/>
            <person name="Fukuda S."/>
            <person name="Kanamori-Katayama M."/>
            <person name="Suzuki M."/>
            <person name="Aoki J."/>
            <person name="Arakawa T."/>
            <person name="Iida J."/>
            <person name="Imamura K."/>
            <person name="Itoh M."/>
            <person name="Kato T."/>
            <person name="Kawaji H."/>
            <person name="Kawagashira N."/>
            <person name="Kawashima T."/>
            <person name="Kojima M."/>
            <person name="Kondo S."/>
            <person name="Konno H."/>
            <person name="Nakano K."/>
            <person name="Ninomiya N."/>
            <person name="Nishio T."/>
            <person name="Okada M."/>
            <person name="Plessy C."/>
            <person name="Shibata K."/>
            <person name="Shiraki T."/>
            <person name="Suzuki S."/>
            <person name="Tagami M."/>
            <person name="Waki K."/>
            <person name="Watahiki A."/>
            <person name="Okamura-Oho Y."/>
            <person name="Suzuki H."/>
            <person name="Kawai J."/>
            <person name="Hayashizaki Y."/>
        </authorList>
    </citation>
    <scope>NUCLEOTIDE SEQUENCE [LARGE SCALE MRNA] OF 485-624</scope>
    <source>
        <strain>C57BL/6J</strain>
    </source>
</reference>
<reference key="3">
    <citation type="journal article" date="2010" name="Cell">
        <title>A tissue-specific atlas of mouse protein phosphorylation and expression.</title>
        <authorList>
            <person name="Huttlin E.L."/>
            <person name="Jedrychowski M.P."/>
            <person name="Elias J.E."/>
            <person name="Goswami T."/>
            <person name="Rad R."/>
            <person name="Beausoleil S.A."/>
            <person name="Villen J."/>
            <person name="Haas W."/>
            <person name="Sowa M.E."/>
            <person name="Gygi S.P."/>
        </authorList>
    </citation>
    <scope>PHOSPHORYLATION [LARGE SCALE ANALYSIS] AT SER-600</scope>
    <scope>IDENTIFICATION BY MASS SPECTROMETRY [LARGE SCALE ANALYSIS]</scope>
    <source>
        <tissue>Testis</tissue>
    </source>
</reference>
<reference key="4">
    <citation type="journal article" date="2010" name="J. Hum. Genet.">
        <title>Screening of genes involved in chromosome segregation during meiosis I: toward the identification of genes responsible for infertility in humans.</title>
        <authorList>
            <person name="Kogo H."/>
            <person name="Kowa-Sugiyama H."/>
            <person name="Yamada K."/>
            <person name="Bolor H."/>
            <person name="Tsutsumi M."/>
            <person name="Ohye T."/>
            <person name="Inagaki H."/>
            <person name="Taniguchi M."/>
            <person name="Toda T."/>
            <person name="Kurahashi H."/>
        </authorList>
    </citation>
    <scope>TISSUE SPECIFICITY</scope>
</reference>
<reference key="5">
    <citation type="journal article" date="2023" name="Heliyon">
        <title>Heat shock factor 5 establishes the male germ-line meiotic sex chromosome inactivation through regulation of Smarca4.</title>
        <authorList>
            <person name="Barutc A.R."/>
            <person name="Frit A.J."/>
            <person name="McCor R.P."/>
            <person name="Nick J.A."/>
            <person name="Asla M."/>
        </authorList>
    </citation>
    <scope>FUNCTION</scope>
    <scope>DISRUPTION PHENOTYPE</scope>
    <scope>SUBCELLULAR LOCATION</scope>
    <scope>TISSUE SPECIFICITY</scope>
</reference>
<reference key="6">
    <citation type="journal article" date="2024" name="Nat. Commun.">
        <title>Atypical heat shock transcription factor HSF5 is critical for male meiotic prophase under non-stress conditions.</title>
        <authorList>
            <person name="Yoshimura S."/>
            <person name="Shimada R."/>
            <person name="Kikuchi K."/>
            <person name="Kawagoe S."/>
            <person name="Abe H."/>
            <person name="Iisaka S."/>
            <person name="Fujimura S."/>
            <person name="Yasunaga K.I."/>
            <person name="Usuki S."/>
            <person name="Tani N."/>
            <person name="Ohba T."/>
            <person name="Kondoh E."/>
            <person name="Saio T."/>
            <person name="Araki K."/>
            <person name="Ishiguro K.I."/>
        </authorList>
    </citation>
    <scope>FUNCTION</scope>
    <scope>DISRUPTION PHENOTYPE</scope>
    <scope>SUBUNIT</scope>
    <scope>SUBCELLULAR LOCATION</scope>
    <scope>TISSUE SPECIFICITY</scope>
</reference>
<accession>Q5ND04</accession>
<accession>B2KGG8</accession>
<accession>Q3TLD8</accession>
<name>HSF5_MOUSE</name>
<organism>
    <name type="scientific">Mus musculus</name>
    <name type="common">Mouse</name>
    <dbReference type="NCBI Taxonomy" id="10090"/>
    <lineage>
        <taxon>Eukaryota</taxon>
        <taxon>Metazoa</taxon>
        <taxon>Chordata</taxon>
        <taxon>Craniata</taxon>
        <taxon>Vertebrata</taxon>
        <taxon>Euteleostomi</taxon>
        <taxon>Mammalia</taxon>
        <taxon>Eutheria</taxon>
        <taxon>Euarchontoglires</taxon>
        <taxon>Glires</taxon>
        <taxon>Rodentia</taxon>
        <taxon>Myomorpha</taxon>
        <taxon>Muroidea</taxon>
        <taxon>Muridae</taxon>
        <taxon>Murinae</taxon>
        <taxon>Mus</taxon>
        <taxon>Mus</taxon>
    </lineage>
</organism>
<evidence type="ECO:0000250" key="1"/>
<evidence type="ECO:0000256" key="2">
    <source>
        <dbReference type="SAM" id="MobiDB-lite"/>
    </source>
</evidence>
<evidence type="ECO:0000269" key="3">
    <source>
    </source>
</evidence>
<evidence type="ECO:0000269" key="4">
    <source>
    </source>
</evidence>
<evidence type="ECO:0000269" key="5">
    <source>
    </source>
</evidence>
<evidence type="ECO:0000305" key="6"/>
<evidence type="ECO:0007744" key="7">
    <source>
    </source>
</evidence>
<feature type="chain" id="PRO_0000333042" description="Heat shock factor protein 5">
    <location>
        <begin position="1"/>
        <end position="624"/>
    </location>
</feature>
<feature type="DNA-binding region" evidence="1">
    <location>
        <begin position="11"/>
        <end position="228"/>
    </location>
</feature>
<feature type="region of interest" description="Disordered" evidence="2">
    <location>
        <begin position="52"/>
        <end position="77"/>
    </location>
</feature>
<feature type="region of interest" description="Disordered" evidence="2">
    <location>
        <begin position="112"/>
        <end position="138"/>
    </location>
</feature>
<feature type="region of interest" description="Disordered" evidence="2">
    <location>
        <begin position="186"/>
        <end position="214"/>
    </location>
</feature>
<feature type="region of interest" description="Disordered" evidence="2">
    <location>
        <begin position="429"/>
        <end position="461"/>
    </location>
</feature>
<feature type="region of interest" description="Disordered" evidence="2">
    <location>
        <begin position="572"/>
        <end position="605"/>
    </location>
</feature>
<feature type="compositionally biased region" description="Gly residues" evidence="2">
    <location>
        <begin position="58"/>
        <end position="77"/>
    </location>
</feature>
<feature type="compositionally biased region" description="Gly residues" evidence="2">
    <location>
        <begin position="112"/>
        <end position="127"/>
    </location>
</feature>
<feature type="compositionally biased region" description="Low complexity" evidence="2">
    <location>
        <begin position="186"/>
        <end position="197"/>
    </location>
</feature>
<feature type="compositionally biased region" description="Low complexity" evidence="2">
    <location>
        <begin position="442"/>
        <end position="457"/>
    </location>
</feature>
<feature type="modified residue" description="Phosphoserine" evidence="7">
    <location>
        <position position="600"/>
    </location>
</feature>
<dbReference type="EMBL" id="AL596086">
    <property type="status" value="NOT_ANNOTATED_CDS"/>
    <property type="molecule type" value="Genomic_DNA"/>
</dbReference>
<dbReference type="EMBL" id="CU393486">
    <property type="status" value="NOT_ANNOTATED_CDS"/>
    <property type="molecule type" value="Genomic_DNA"/>
</dbReference>
<dbReference type="EMBL" id="AK166561">
    <property type="protein sequence ID" value="BAE38854.1"/>
    <property type="molecule type" value="mRNA"/>
</dbReference>
<dbReference type="CCDS" id="CCDS36269.1"/>
<dbReference type="RefSeq" id="NP_001038992.1">
    <property type="nucleotide sequence ID" value="NM_001045527.1"/>
</dbReference>
<dbReference type="SMR" id="Q5ND04"/>
<dbReference type="FunCoup" id="Q5ND04">
    <property type="interactions" value="929"/>
</dbReference>
<dbReference type="STRING" id="10090.ENSMUSP00000091488"/>
<dbReference type="GlyGen" id="Q5ND04">
    <property type="glycosylation" value="1 site"/>
</dbReference>
<dbReference type="iPTMnet" id="Q5ND04"/>
<dbReference type="PhosphoSitePlus" id="Q5ND04"/>
<dbReference type="SwissPalm" id="Q5ND04"/>
<dbReference type="PaxDb" id="10090-ENSMUSP00000091488"/>
<dbReference type="PeptideAtlas" id="Q5ND04"/>
<dbReference type="ProteomicsDB" id="267067"/>
<dbReference type="Antibodypedia" id="18396">
    <property type="antibodies" value="92 antibodies from 22 providers"/>
</dbReference>
<dbReference type="Ensembl" id="ENSMUST00000093956.4">
    <property type="protein sequence ID" value="ENSMUSP00000091488.4"/>
    <property type="gene ID" value="ENSMUSG00000070345.4"/>
</dbReference>
<dbReference type="GeneID" id="327992"/>
<dbReference type="KEGG" id="mmu:327992"/>
<dbReference type="UCSC" id="uc007kuc.1">
    <property type="organism name" value="mouse"/>
</dbReference>
<dbReference type="AGR" id="MGI:2685585"/>
<dbReference type="CTD" id="124535"/>
<dbReference type="MGI" id="MGI:2685585">
    <property type="gene designation" value="Hsf5"/>
</dbReference>
<dbReference type="VEuPathDB" id="HostDB:ENSMUSG00000070345"/>
<dbReference type="eggNOG" id="KOG1508">
    <property type="taxonomic scope" value="Eukaryota"/>
</dbReference>
<dbReference type="GeneTree" id="ENSGT00510000048674"/>
<dbReference type="HOGENOM" id="CLU_037490_1_0_1"/>
<dbReference type="InParanoid" id="Q5ND04"/>
<dbReference type="OMA" id="HRIWQNS"/>
<dbReference type="OrthoDB" id="6418155at2759"/>
<dbReference type="PhylomeDB" id="Q5ND04"/>
<dbReference type="TreeFam" id="TF330401"/>
<dbReference type="BioGRID-ORCS" id="327992">
    <property type="hits" value="2 hits in 77 CRISPR screens"/>
</dbReference>
<dbReference type="ChiTaRS" id="Hsf5">
    <property type="organism name" value="mouse"/>
</dbReference>
<dbReference type="PRO" id="PR:Q5ND04"/>
<dbReference type="Proteomes" id="UP000000589">
    <property type="component" value="Chromosome 11"/>
</dbReference>
<dbReference type="RNAct" id="Q5ND04">
    <property type="molecule type" value="protein"/>
</dbReference>
<dbReference type="Bgee" id="ENSMUSG00000070345">
    <property type="expression patterns" value="Expressed in spermatocyte and 25 other cell types or tissues"/>
</dbReference>
<dbReference type="GO" id="GO:0005634">
    <property type="term" value="C:nucleus"/>
    <property type="evidence" value="ECO:0000314"/>
    <property type="project" value="UniProtKB"/>
</dbReference>
<dbReference type="GO" id="GO:0001741">
    <property type="term" value="C:XY body"/>
    <property type="evidence" value="ECO:0000314"/>
    <property type="project" value="UniProtKB"/>
</dbReference>
<dbReference type="GO" id="GO:0001216">
    <property type="term" value="F:DNA-binding transcription activator activity"/>
    <property type="evidence" value="ECO:0000315"/>
    <property type="project" value="UniProtKB"/>
</dbReference>
<dbReference type="GO" id="GO:0001217">
    <property type="term" value="F:DNA-binding transcription repressor activity"/>
    <property type="evidence" value="ECO:0000315"/>
    <property type="project" value="UniProtKB"/>
</dbReference>
<dbReference type="GO" id="GO:1990837">
    <property type="term" value="F:sequence-specific double-stranded DNA binding"/>
    <property type="evidence" value="ECO:0007669"/>
    <property type="project" value="Ensembl"/>
</dbReference>
<dbReference type="GO" id="GO:0030154">
    <property type="term" value="P:cell differentiation"/>
    <property type="evidence" value="ECO:0007669"/>
    <property type="project" value="UniProtKB-KW"/>
</dbReference>
<dbReference type="GO" id="GO:0007140">
    <property type="term" value="P:male meiotic nuclear division"/>
    <property type="evidence" value="ECO:0000315"/>
    <property type="project" value="UniProtKB"/>
</dbReference>
<dbReference type="GO" id="GO:0007283">
    <property type="term" value="P:spermatogenesis"/>
    <property type="evidence" value="ECO:0000315"/>
    <property type="project" value="UniProtKB"/>
</dbReference>
<dbReference type="FunFam" id="1.10.10.10:FF:000531">
    <property type="entry name" value="Heat shock transcription factor 5"/>
    <property type="match status" value="1"/>
</dbReference>
<dbReference type="Gene3D" id="1.10.10.10">
    <property type="entry name" value="Winged helix-like DNA-binding domain superfamily/Winged helix DNA-binding domain"/>
    <property type="match status" value="1"/>
</dbReference>
<dbReference type="InterPro" id="IPR000232">
    <property type="entry name" value="HSF_DNA-bd"/>
</dbReference>
<dbReference type="InterPro" id="IPR036388">
    <property type="entry name" value="WH-like_DNA-bd_sf"/>
</dbReference>
<dbReference type="InterPro" id="IPR036390">
    <property type="entry name" value="WH_DNA-bd_sf"/>
</dbReference>
<dbReference type="PANTHER" id="PTHR10015:SF278">
    <property type="entry name" value="HEAT SHOCK FACTOR PROTEIN 5"/>
    <property type="match status" value="1"/>
</dbReference>
<dbReference type="PANTHER" id="PTHR10015">
    <property type="entry name" value="HEAT SHOCK TRANSCRIPTION FACTOR"/>
    <property type="match status" value="1"/>
</dbReference>
<dbReference type="Pfam" id="PF00447">
    <property type="entry name" value="HSF_DNA-bind"/>
    <property type="match status" value="1"/>
</dbReference>
<dbReference type="SMART" id="SM00415">
    <property type="entry name" value="HSF"/>
    <property type="match status" value="1"/>
</dbReference>
<dbReference type="SUPFAM" id="SSF46785">
    <property type="entry name" value="Winged helix' DNA-binding domain"/>
    <property type="match status" value="1"/>
</dbReference>
<sequence length="624" mass="67316">MEEALLSTPINPNNFPAKLWRLVNSPRYRSIRWDGRGEGLLIDQPLFEAELLSPPGPGAGGAGGAGSSGGGGGSGVGAAGAEPELFKTTNFTSFIRQLNLYGFRKVVLGGPGAAGPGPGPGAGGPAGDGPLHHFHSPHFRRDQPQLLVHLKRLTSANKAKLAAGLEVPCRPPNRFQRLLITSASASASASTSPLQHQDPPPQPAGPRPEQHGPVAVGQFHRSFRRDNLSPYSYVSTSSHNHSAFPLKGLDRTPIPPRTWQNSLGMHPGQVETSPTFSDKGVPFPVLQRFPTEVTYTLQPSATSVHVQQGPQTMVSSSQKYSNYTPSAQYSQAYYPTAVLQCCSPPTHMDALSSCVTPTASSYAHCNYFQNPPMQSSYPVEFLPSNWPCSATDENKKTEVNLEAVFQIVDELHSSPKLEMVKVEPVETQCPSSQANRGQHILPNANSSNPSSTSQASQLEPLTPVGSDITSFVVGTEQAITCSLPQSPEYIYTIHTAQPLENSTMQESATIQQTHVKLKEQLNHNPSPSSVVFVQEGLPFSTPQVDSSIKCQTNPSENILPSEQMGFLISEMGPANKSTKDTGLSTPARYRERRSNSQGKSPDLHLLVDVACKQEHFPKEEELKE</sequence>
<keyword id="KW-0010">Activator</keyword>
<keyword id="KW-0158">Chromosome</keyword>
<keyword id="KW-0221">Differentiation</keyword>
<keyword id="KW-0238">DNA-binding</keyword>
<keyword id="KW-0469">Meiosis</keyword>
<keyword id="KW-0539">Nucleus</keyword>
<keyword id="KW-0597">Phosphoprotein</keyword>
<keyword id="KW-1185">Reference proteome</keyword>
<keyword id="KW-0678">Repressor</keyword>
<keyword id="KW-0744">Spermatogenesis</keyword>
<keyword id="KW-0804">Transcription</keyword>
<keyword id="KW-0805">Transcription regulation</keyword>
<protein>
    <recommendedName>
        <fullName>Heat shock factor protein 5</fullName>
        <shortName>HSF 5</shortName>
    </recommendedName>
    <alternativeName>
        <fullName>Heat shock transcription factor 5</fullName>
        <shortName>HSTF 5</shortName>
    </alternativeName>
    <alternativeName>
        <fullName>Protein expressed in male leptotene and zygotene spermatocytes 220</fullName>
        <shortName>MLZ-220</shortName>
    </alternativeName>
</protein>